<sequence>MGLTTKPLSLKVNAALFDVDGTIIISQPAIAAFWRDFGKDKPYFDAEHVIQVSHGWRTFDAIAKFAPDFANEEYVNKLEAEIPVKYGEKSIEVPGAVKLCNALNALPKEKWAVATSGTRDMAQKWFEHLGIRRPKYFITANDVKQGKPHPEPYLKGRNGLGYPINEQDPSKSKVVVFEDAPAGIAAGKAAGCKIIGIATTFDLDFLKEKGCDIIVKNHESIRVGGYNAETDEVEFIFDDYLYAKDDLLKW</sequence>
<name>GPP2_YEAST</name>
<reference key="1">
    <citation type="journal article" date="1995" name="Mol. Gen. Genet.">
        <title>Cloning and characterization of seven cDNAs for hyperosmolarity-responsive (HOR) genes of Saccharomyces cerevisiae.</title>
        <authorList>
            <person name="Hirayama T."/>
            <person name="Maeda T."/>
            <person name="Saito H."/>
            <person name="Shinozaki K."/>
        </authorList>
    </citation>
    <scope>NUCLEOTIDE SEQUENCE [MRNA]</scope>
    <source>
        <strain>RS16</strain>
    </source>
</reference>
<reference key="2">
    <citation type="journal article" date="1997" name="Nature">
        <title>The nucleotide sequence of Saccharomyces cerevisiae chromosome V.</title>
        <authorList>
            <person name="Dietrich F.S."/>
            <person name="Mulligan J.T."/>
            <person name="Hennessy K.M."/>
            <person name="Yelton M.A."/>
            <person name="Allen E."/>
            <person name="Araujo R."/>
            <person name="Aviles E."/>
            <person name="Berno A."/>
            <person name="Brennan T."/>
            <person name="Carpenter J."/>
            <person name="Chen E."/>
            <person name="Cherry J.M."/>
            <person name="Chung E."/>
            <person name="Duncan M."/>
            <person name="Guzman E."/>
            <person name="Hartzell G."/>
            <person name="Hunicke-Smith S."/>
            <person name="Hyman R.W."/>
            <person name="Kayser A."/>
            <person name="Komp C."/>
            <person name="Lashkari D."/>
            <person name="Lew H."/>
            <person name="Lin D."/>
            <person name="Mosedale D."/>
            <person name="Nakahara K."/>
            <person name="Namath A."/>
            <person name="Norgren R."/>
            <person name="Oefner P."/>
            <person name="Oh C."/>
            <person name="Petel F.X."/>
            <person name="Roberts D."/>
            <person name="Sehl P."/>
            <person name="Schramm S."/>
            <person name="Shogren T."/>
            <person name="Smith V."/>
            <person name="Taylor P."/>
            <person name="Wei Y."/>
            <person name="Botstein D."/>
            <person name="Davis R.W."/>
        </authorList>
    </citation>
    <scope>NUCLEOTIDE SEQUENCE [LARGE SCALE GENOMIC DNA]</scope>
    <source>
        <strain>ATCC 204508 / S288c</strain>
    </source>
</reference>
<reference key="3">
    <citation type="journal article" date="2014" name="G3 (Bethesda)">
        <title>The reference genome sequence of Saccharomyces cerevisiae: Then and now.</title>
        <authorList>
            <person name="Engel S.R."/>
            <person name="Dietrich F.S."/>
            <person name="Fisk D.G."/>
            <person name="Binkley G."/>
            <person name="Balakrishnan R."/>
            <person name="Costanzo M.C."/>
            <person name="Dwight S.S."/>
            <person name="Hitz B.C."/>
            <person name="Karra K."/>
            <person name="Nash R.S."/>
            <person name="Weng S."/>
            <person name="Wong E.D."/>
            <person name="Lloyd P."/>
            <person name="Skrzypek M.S."/>
            <person name="Miyasato S.R."/>
            <person name="Simison M."/>
            <person name="Cherry J.M."/>
        </authorList>
    </citation>
    <scope>GENOME REANNOTATION</scope>
    <source>
        <strain>ATCC 204508 / S288c</strain>
    </source>
</reference>
<reference key="4">
    <citation type="journal article" date="1996" name="J. Biol. Chem.">
        <title>Purification and characterization of two isoenzymes of DL-glycerol-3-phosphatase from Saccharomyces cerevisiae. Identification of the corresponding GPP1 and GPP2 genes and evidence for osmotic regulation of Gpp2p expression by the osmosensing mitogen-activated protein kinase signal transduction pathway.</title>
        <authorList>
            <person name="Norbeck J."/>
            <person name="Paehlman A.-K."/>
            <person name="Akhtar N."/>
            <person name="Blomberg A."/>
            <person name="Adler L."/>
        </authorList>
    </citation>
    <scope>PARTIAL PROTEIN SEQUENCE</scope>
    <scope>FUNCTION</scope>
    <scope>CATALYTIC ACTIVITY</scope>
    <scope>BIOPHYSICOCHEMICAL PROPERTIES</scope>
    <scope>SUBUNIT</scope>
    <scope>INDUCTION</scope>
</reference>
<reference key="5">
    <citation type="journal article" date="2003" name="Nature">
        <title>Global analysis of protein localization in budding yeast.</title>
        <authorList>
            <person name="Huh W.-K."/>
            <person name="Falvo J.V."/>
            <person name="Gerke L.C."/>
            <person name="Carroll A.S."/>
            <person name="Howson R.W."/>
            <person name="Weissman J.S."/>
            <person name="O'Shea E.K."/>
        </authorList>
    </citation>
    <scope>SUBCELLULAR LOCATION [LARGE SCALE ANALYSIS]</scope>
</reference>
<reference key="6">
    <citation type="journal article" date="2003" name="Nature">
        <title>Global analysis of protein expression in yeast.</title>
        <authorList>
            <person name="Ghaemmaghami S."/>
            <person name="Huh W.-K."/>
            <person name="Bower K."/>
            <person name="Howson R.W."/>
            <person name="Belle A."/>
            <person name="Dephoure N."/>
            <person name="O'Shea E.K."/>
            <person name="Weissman J.S."/>
        </authorList>
    </citation>
    <scope>LEVEL OF PROTEIN EXPRESSION [LARGE SCALE ANALYSIS]</scope>
</reference>
<proteinExistence type="evidence at protein level"/>
<gene>
    <name evidence="7" type="primary">GPP2</name>
    <name evidence="6" type="synonym">HOR2</name>
    <name type="ordered locus">YER062C</name>
</gene>
<dbReference type="EC" id="3.1.3.21" evidence="5"/>
<dbReference type="EMBL" id="D50469">
    <property type="protein sequence ID" value="BAA09058.1"/>
    <property type="molecule type" value="mRNA"/>
</dbReference>
<dbReference type="EMBL" id="U18813">
    <property type="protein sequence ID" value="AAB64598.1"/>
    <property type="molecule type" value="Genomic_DNA"/>
</dbReference>
<dbReference type="EMBL" id="BK006939">
    <property type="protein sequence ID" value="DAA07721.1"/>
    <property type="molecule type" value="Genomic_DNA"/>
</dbReference>
<dbReference type="PIR" id="S50565">
    <property type="entry name" value="S50565"/>
</dbReference>
<dbReference type="RefSeq" id="NP_010984.3">
    <property type="nucleotide sequence ID" value="NM_001178953.3"/>
</dbReference>
<dbReference type="SMR" id="P40106"/>
<dbReference type="BioGRID" id="36804">
    <property type="interactions" value="97"/>
</dbReference>
<dbReference type="DIP" id="DIP-1366N"/>
<dbReference type="FunCoup" id="P40106">
    <property type="interactions" value="393"/>
</dbReference>
<dbReference type="IntAct" id="P40106">
    <property type="interactions" value="8"/>
</dbReference>
<dbReference type="MINT" id="P40106"/>
<dbReference type="STRING" id="4932.YER062C"/>
<dbReference type="iPTMnet" id="P40106"/>
<dbReference type="PaxDb" id="4932-YER062C"/>
<dbReference type="PeptideAtlas" id="P40106"/>
<dbReference type="EnsemblFungi" id="YER062C_mRNA">
    <property type="protein sequence ID" value="YER062C"/>
    <property type="gene ID" value="YER062C"/>
</dbReference>
<dbReference type="GeneID" id="856791"/>
<dbReference type="KEGG" id="sce:YER062C"/>
<dbReference type="AGR" id="SGD:S000000864"/>
<dbReference type="SGD" id="S000000864">
    <property type="gene designation" value="GPP2"/>
</dbReference>
<dbReference type="VEuPathDB" id="FungiDB:YER062C"/>
<dbReference type="eggNOG" id="KOG2914">
    <property type="taxonomic scope" value="Eukaryota"/>
</dbReference>
<dbReference type="GeneTree" id="ENSGT00940000176698"/>
<dbReference type="HOGENOM" id="CLU_045011_13_4_1"/>
<dbReference type="InParanoid" id="P40106"/>
<dbReference type="OMA" id="SWAICTS"/>
<dbReference type="OrthoDB" id="40579at2759"/>
<dbReference type="BioCyc" id="MetaCyc:YER062C-MONOMER"/>
<dbReference type="BioCyc" id="YEAST:YER062C-MONOMER"/>
<dbReference type="BRENDA" id="3.1.3.21">
    <property type="organism ID" value="984"/>
</dbReference>
<dbReference type="BioGRID-ORCS" id="856791">
    <property type="hits" value="0 hits in 10 CRISPR screens"/>
</dbReference>
<dbReference type="PRO" id="PR:P40106"/>
<dbReference type="Proteomes" id="UP000002311">
    <property type="component" value="Chromosome V"/>
</dbReference>
<dbReference type="RNAct" id="P40106">
    <property type="molecule type" value="protein"/>
</dbReference>
<dbReference type="GO" id="GO:0005737">
    <property type="term" value="C:cytoplasm"/>
    <property type="evidence" value="ECO:0007005"/>
    <property type="project" value="SGD"/>
</dbReference>
<dbReference type="GO" id="GO:0005634">
    <property type="term" value="C:nucleus"/>
    <property type="evidence" value="ECO:0007005"/>
    <property type="project" value="SGD"/>
</dbReference>
<dbReference type="GO" id="GO:0000121">
    <property type="term" value="F:glycerol-1-phosphatase activity"/>
    <property type="evidence" value="ECO:0000314"/>
    <property type="project" value="SGD"/>
</dbReference>
<dbReference type="GO" id="GO:0043136">
    <property type="term" value="F:glycerol-3-phosphatase activity"/>
    <property type="evidence" value="ECO:0007669"/>
    <property type="project" value="RHEA"/>
</dbReference>
<dbReference type="GO" id="GO:0046872">
    <property type="term" value="F:metal ion binding"/>
    <property type="evidence" value="ECO:0007669"/>
    <property type="project" value="UniProtKB-KW"/>
</dbReference>
<dbReference type="GO" id="GO:0005975">
    <property type="term" value="P:carbohydrate metabolic process"/>
    <property type="evidence" value="ECO:0000314"/>
    <property type="project" value="SGD"/>
</dbReference>
<dbReference type="GO" id="GO:0006114">
    <property type="term" value="P:glycerol biosynthetic process"/>
    <property type="evidence" value="ECO:0000315"/>
    <property type="project" value="SGD"/>
</dbReference>
<dbReference type="GO" id="GO:0006970">
    <property type="term" value="P:response to osmotic stress"/>
    <property type="evidence" value="ECO:0000314"/>
    <property type="project" value="SGD"/>
</dbReference>
<dbReference type="CDD" id="cd07527">
    <property type="entry name" value="HAD_ScGPP-like"/>
    <property type="match status" value="1"/>
</dbReference>
<dbReference type="FunFam" id="1.10.150.240:FF:000012">
    <property type="entry name" value="Glycerol-1-phosphate phosphohydrolase 1"/>
    <property type="match status" value="1"/>
</dbReference>
<dbReference type="FunFam" id="3.40.50.1000:FF:000033">
    <property type="entry name" value="Sugar phosphatase YfbT"/>
    <property type="match status" value="1"/>
</dbReference>
<dbReference type="Gene3D" id="3.40.50.1000">
    <property type="entry name" value="HAD superfamily/HAD-like"/>
    <property type="match status" value="1"/>
</dbReference>
<dbReference type="Gene3D" id="1.10.150.240">
    <property type="entry name" value="Putative phosphatase, domain 2"/>
    <property type="match status" value="1"/>
</dbReference>
<dbReference type="InterPro" id="IPR036412">
    <property type="entry name" value="HAD-like_sf"/>
</dbReference>
<dbReference type="InterPro" id="IPR051806">
    <property type="entry name" value="HAD-like_SPP"/>
</dbReference>
<dbReference type="InterPro" id="IPR006439">
    <property type="entry name" value="HAD-SF_hydro_IA"/>
</dbReference>
<dbReference type="InterPro" id="IPR023214">
    <property type="entry name" value="HAD_sf"/>
</dbReference>
<dbReference type="InterPro" id="IPR023198">
    <property type="entry name" value="PGP-like_dom2"/>
</dbReference>
<dbReference type="NCBIfam" id="TIGR01509">
    <property type="entry name" value="HAD-SF-IA-v3"/>
    <property type="match status" value="1"/>
</dbReference>
<dbReference type="PANTHER" id="PTHR43481">
    <property type="entry name" value="FRUCTOSE-1-PHOSPHATE PHOSPHATASE"/>
    <property type="match status" value="1"/>
</dbReference>
<dbReference type="PANTHER" id="PTHR43481:SF4">
    <property type="entry name" value="GLYCEROL-1-PHOSPHATE PHOSPHOHYDROLASE 1-RELATED"/>
    <property type="match status" value="1"/>
</dbReference>
<dbReference type="Pfam" id="PF00702">
    <property type="entry name" value="Hydrolase"/>
    <property type="match status" value="1"/>
</dbReference>
<dbReference type="SFLD" id="SFLDG01129">
    <property type="entry name" value="C1.5:_HAD__Beta-PGM__Phosphata"/>
    <property type="match status" value="1"/>
</dbReference>
<dbReference type="SFLD" id="SFLDF00037">
    <property type="entry name" value="glycerol-3-phosphate_phosphata"/>
    <property type="match status" value="1"/>
</dbReference>
<dbReference type="SUPFAM" id="SSF56784">
    <property type="entry name" value="HAD-like"/>
    <property type="match status" value="1"/>
</dbReference>
<protein>
    <recommendedName>
        <fullName evidence="8">Glycerol-1-phosphate phosphohydrolase 2</fullName>
        <ecNumber evidence="5">3.1.3.21</ecNumber>
    </recommendedName>
    <alternativeName>
        <fullName evidence="7">(DL)-glycerol-3-phosphatase 2</fullName>
    </alternativeName>
    <alternativeName>
        <fullName evidence="6">Hyperosmolarity-responsive protein 2</fullName>
    </alternativeName>
</protein>
<keyword id="KW-0963">Cytoplasm</keyword>
<keyword id="KW-0903">Direct protein sequencing</keyword>
<keyword id="KW-0378">Hydrolase</keyword>
<keyword id="KW-1017">Isopeptide bond</keyword>
<keyword id="KW-0460">Magnesium</keyword>
<keyword id="KW-0479">Metal-binding</keyword>
<keyword id="KW-0539">Nucleus</keyword>
<keyword id="KW-0597">Phosphoprotein</keyword>
<keyword id="KW-1185">Reference proteome</keyword>
<keyword id="KW-0346">Stress response</keyword>
<keyword id="KW-0832">Ubl conjugation</keyword>
<feature type="chain" id="PRO_0000087561" description="Glycerol-1-phosphate phosphohydrolase 2">
    <location>
        <begin position="1"/>
        <end position="250"/>
    </location>
</feature>
<feature type="active site" description="Nucleophile" evidence="1">
    <location>
        <position position="18"/>
    </location>
</feature>
<feature type="active site" description="Proton donor" evidence="1">
    <location>
        <position position="20"/>
    </location>
</feature>
<feature type="binding site" evidence="1">
    <location>
        <position position="18"/>
    </location>
    <ligand>
        <name>Mg(2+)</name>
        <dbReference type="ChEBI" id="CHEBI:18420"/>
    </ligand>
</feature>
<feature type="binding site" evidence="1">
    <location>
        <position position="20"/>
    </location>
    <ligand>
        <name>Mg(2+)</name>
        <dbReference type="ChEBI" id="CHEBI:18420"/>
    </ligand>
</feature>
<feature type="binding site" evidence="1">
    <location>
        <position position="179"/>
    </location>
    <ligand>
        <name>Mg(2+)</name>
        <dbReference type="ChEBI" id="CHEBI:18420"/>
    </ligand>
</feature>
<feature type="modified residue" description="Phosphoserine" evidence="2">
    <location>
        <position position="90"/>
    </location>
</feature>
<feature type="cross-link" description="Glycyl lysine isopeptide (Lys-Gly) (interchain with G-Cter in ubiquitin)" evidence="2">
    <location>
        <position position="64"/>
    </location>
</feature>
<feature type="cross-link" description="Glycyl lysine isopeptide (Lys-Gly) (interchain with G-Cter in ubiquitin)" evidence="2">
    <location>
        <position position="144"/>
    </location>
</feature>
<accession>P40106</accession>
<accession>D3DLW7</accession>
<evidence type="ECO:0000250" key="1"/>
<evidence type="ECO:0000250" key="2">
    <source>
        <dbReference type="UniProtKB" id="P41277"/>
    </source>
</evidence>
<evidence type="ECO:0000269" key="3">
    <source>
    </source>
</evidence>
<evidence type="ECO:0000269" key="4">
    <source>
    </source>
</evidence>
<evidence type="ECO:0000269" key="5">
    <source>
    </source>
</evidence>
<evidence type="ECO:0000303" key="6">
    <source>
    </source>
</evidence>
<evidence type="ECO:0000303" key="7">
    <source>
    </source>
</evidence>
<evidence type="ECO:0000305" key="8"/>
<evidence type="ECO:0000305" key="9">
    <source>
    </source>
</evidence>
<organism>
    <name type="scientific">Saccharomyces cerevisiae (strain ATCC 204508 / S288c)</name>
    <name type="common">Baker's yeast</name>
    <dbReference type="NCBI Taxonomy" id="559292"/>
    <lineage>
        <taxon>Eukaryota</taxon>
        <taxon>Fungi</taxon>
        <taxon>Dikarya</taxon>
        <taxon>Ascomycota</taxon>
        <taxon>Saccharomycotina</taxon>
        <taxon>Saccharomycetes</taxon>
        <taxon>Saccharomycetales</taxon>
        <taxon>Saccharomycetaceae</taxon>
        <taxon>Saccharomyces</taxon>
    </lineage>
</organism>
<comment type="function">
    <text evidence="5">Glycerol-1-phosphate phosphohydrolase involved in glycerol biosynthesis. Plays a role in osmoadaptation.</text>
</comment>
<comment type="catalytic activity">
    <reaction evidence="5">
        <text>sn-glycerol 1-phosphate + H2O = glycerol + phosphate</text>
        <dbReference type="Rhea" id="RHEA:46084"/>
        <dbReference type="ChEBI" id="CHEBI:15377"/>
        <dbReference type="ChEBI" id="CHEBI:17754"/>
        <dbReference type="ChEBI" id="CHEBI:43474"/>
        <dbReference type="ChEBI" id="CHEBI:57685"/>
        <dbReference type="EC" id="3.1.3.21"/>
    </reaction>
</comment>
<comment type="catalytic activity">
    <reaction evidence="5">
        <text>sn-glycerol 3-phosphate + H2O = glycerol + phosphate</text>
        <dbReference type="Rhea" id="RHEA:66372"/>
        <dbReference type="ChEBI" id="CHEBI:15377"/>
        <dbReference type="ChEBI" id="CHEBI:17754"/>
        <dbReference type="ChEBI" id="CHEBI:43474"/>
        <dbReference type="ChEBI" id="CHEBI:57597"/>
        <dbReference type="EC" id="3.1.3.21"/>
    </reaction>
</comment>
<comment type="cofactor">
    <cofactor evidence="9">
        <name>Mg(2+)</name>
        <dbReference type="ChEBI" id="CHEBI:18420"/>
    </cofactor>
</comment>
<comment type="biophysicochemical properties">
    <kinetics>
        <KM evidence="5">3.9 mM for (DL)-glycerol 3-phosphate</KM>
        <Vmax evidence="5">46.0 umol/min/mg enzyme</Vmax>
    </kinetics>
    <phDependence>
        <text evidence="5">Optimum pH is 6.5.</text>
    </phDependence>
</comment>
<comment type="subunit">
    <text evidence="5">Monomer.</text>
</comment>
<comment type="interaction">
    <interactant intactId="EBI-7836">
        <id>P40106</id>
    </interactant>
    <interactant intactId="EBI-7694">
        <id>P32190</id>
        <label>GUT1</label>
    </interactant>
    <organismsDiffer>false</organismsDiffer>
    <experiments>2</experiments>
</comment>
<comment type="subcellular location">
    <subcellularLocation>
        <location evidence="3">Cytoplasm</location>
    </subcellularLocation>
    <subcellularLocation>
        <location evidence="3">Nucleus</location>
    </subcellularLocation>
</comment>
<comment type="induction">
    <text evidence="5">By osmotic stress (at protein level).</text>
</comment>
<comment type="miscellaneous">
    <text evidence="4">Present with 5000 molecules/cell in log phase SD medium.</text>
</comment>
<comment type="similarity">
    <text evidence="8">Belongs to the HAD-like hydrolase superfamily. DOG/GPP family.</text>
</comment>